<feature type="chain" id="PRO_1000164689" description="Orotate phosphoribosyltransferase">
    <location>
        <begin position="1"/>
        <end position="232"/>
    </location>
</feature>
<feature type="binding site" evidence="1">
    <location>
        <position position="107"/>
    </location>
    <ligand>
        <name>5-phospho-alpha-D-ribose 1-diphosphate</name>
        <dbReference type="ChEBI" id="CHEBI:58017"/>
        <note>ligand shared between dimeric partners</note>
    </ligand>
</feature>
<feature type="binding site" description="in other chain" evidence="1">
    <location>
        <position position="108"/>
    </location>
    <ligand>
        <name>5-phospho-alpha-D-ribose 1-diphosphate</name>
        <dbReference type="ChEBI" id="CHEBI:58017"/>
        <note>ligand shared between dimeric partners</note>
    </ligand>
</feature>
<feature type="binding site" evidence="1">
    <location>
        <position position="111"/>
    </location>
    <ligand>
        <name>5-phospho-alpha-D-ribose 1-diphosphate</name>
        <dbReference type="ChEBI" id="CHEBI:58017"/>
        <note>ligand shared between dimeric partners</note>
    </ligand>
</feature>
<feature type="binding site" evidence="1">
    <location>
        <position position="113"/>
    </location>
    <ligand>
        <name>5-phospho-alpha-D-ribose 1-diphosphate</name>
        <dbReference type="ChEBI" id="CHEBI:58017"/>
        <note>ligand shared between dimeric partners</note>
    </ligand>
</feature>
<feature type="binding site" description="in other chain" evidence="1">
    <location>
        <begin position="133"/>
        <end position="141"/>
    </location>
    <ligand>
        <name>5-phospho-alpha-D-ribose 1-diphosphate</name>
        <dbReference type="ChEBI" id="CHEBI:58017"/>
        <note>ligand shared between dimeric partners</note>
    </ligand>
</feature>
<feature type="binding site" evidence="1">
    <location>
        <position position="137"/>
    </location>
    <ligand>
        <name>orotate</name>
        <dbReference type="ChEBI" id="CHEBI:30839"/>
    </ligand>
</feature>
<organism>
    <name type="scientific">Sinorhizobium fredii (strain NBRC 101917 / NGR234)</name>
    <dbReference type="NCBI Taxonomy" id="394"/>
    <lineage>
        <taxon>Bacteria</taxon>
        <taxon>Pseudomonadati</taxon>
        <taxon>Pseudomonadota</taxon>
        <taxon>Alphaproteobacteria</taxon>
        <taxon>Hyphomicrobiales</taxon>
        <taxon>Rhizobiaceae</taxon>
        <taxon>Sinorhizobium/Ensifer group</taxon>
        <taxon>Sinorhizobium</taxon>
    </lineage>
</organism>
<name>PYRE_SINFN</name>
<gene>
    <name evidence="1" type="primary">pyrE</name>
    <name type="ordered locus">NGR_c01150</name>
</gene>
<accession>C3MF81</accession>
<sequence>MFSNAFTDKTVMAELVAKMLWEIKAVHFRADEPYKLSSGMASPVYIDCRKLISYPRIRSAVMDFAAATILRDAGFEQFDVVAGGETAGIPFAAMLAERLGLPMIYVRKAPKGHGRNAQIEGHMPEGARVLVIEDLTTAGGSMFKFIDAIRAAGGIVEHGIALFYYDIFPEARGNMKSKGVDLHYIATWRNVLAVAREQALFDEKTLNEVEAFLNAPLAWSERNGGVGTLAAQ</sequence>
<evidence type="ECO:0000255" key="1">
    <source>
        <dbReference type="HAMAP-Rule" id="MF_01208"/>
    </source>
</evidence>
<dbReference type="EC" id="2.4.2.10" evidence="1"/>
<dbReference type="EMBL" id="CP001389">
    <property type="protein sequence ID" value="ACP23918.1"/>
    <property type="molecule type" value="Genomic_DNA"/>
</dbReference>
<dbReference type="RefSeq" id="WP_012706703.1">
    <property type="nucleotide sequence ID" value="NC_012587.1"/>
</dbReference>
<dbReference type="RefSeq" id="YP_002824671.1">
    <property type="nucleotide sequence ID" value="NC_012587.1"/>
</dbReference>
<dbReference type="SMR" id="C3MF81"/>
<dbReference type="STRING" id="394.NGR_c01150"/>
<dbReference type="KEGG" id="rhi:NGR_c01150"/>
<dbReference type="PATRIC" id="fig|394.7.peg.2913"/>
<dbReference type="eggNOG" id="COG0461">
    <property type="taxonomic scope" value="Bacteria"/>
</dbReference>
<dbReference type="HOGENOM" id="CLU_074878_1_0_5"/>
<dbReference type="OrthoDB" id="9802134at2"/>
<dbReference type="UniPathway" id="UPA00070">
    <property type="reaction ID" value="UER00119"/>
</dbReference>
<dbReference type="Proteomes" id="UP000001054">
    <property type="component" value="Chromosome"/>
</dbReference>
<dbReference type="GO" id="GO:0000287">
    <property type="term" value="F:magnesium ion binding"/>
    <property type="evidence" value="ECO:0007669"/>
    <property type="project" value="UniProtKB-UniRule"/>
</dbReference>
<dbReference type="GO" id="GO:0004588">
    <property type="term" value="F:orotate phosphoribosyltransferase activity"/>
    <property type="evidence" value="ECO:0007669"/>
    <property type="project" value="UniProtKB-UniRule"/>
</dbReference>
<dbReference type="GO" id="GO:0044205">
    <property type="term" value="P:'de novo' UMP biosynthetic process"/>
    <property type="evidence" value="ECO:0007669"/>
    <property type="project" value="UniProtKB-UniRule"/>
</dbReference>
<dbReference type="GO" id="GO:0019856">
    <property type="term" value="P:pyrimidine nucleobase biosynthetic process"/>
    <property type="evidence" value="ECO:0007669"/>
    <property type="project" value="TreeGrafter"/>
</dbReference>
<dbReference type="CDD" id="cd06223">
    <property type="entry name" value="PRTases_typeI"/>
    <property type="match status" value="1"/>
</dbReference>
<dbReference type="Gene3D" id="3.40.50.2020">
    <property type="match status" value="1"/>
</dbReference>
<dbReference type="HAMAP" id="MF_01208">
    <property type="entry name" value="PyrE"/>
    <property type="match status" value="1"/>
</dbReference>
<dbReference type="InterPro" id="IPR023031">
    <property type="entry name" value="OPRT"/>
</dbReference>
<dbReference type="InterPro" id="IPR004467">
    <property type="entry name" value="Or_phspho_trans_dom"/>
</dbReference>
<dbReference type="InterPro" id="IPR000836">
    <property type="entry name" value="PRibTrfase_dom"/>
</dbReference>
<dbReference type="InterPro" id="IPR029057">
    <property type="entry name" value="PRTase-like"/>
</dbReference>
<dbReference type="NCBIfam" id="NF001729">
    <property type="entry name" value="PRK00455.1-3"/>
    <property type="match status" value="1"/>
</dbReference>
<dbReference type="NCBIfam" id="TIGR00336">
    <property type="entry name" value="pyrE"/>
    <property type="match status" value="1"/>
</dbReference>
<dbReference type="PANTHER" id="PTHR19278">
    <property type="entry name" value="OROTATE PHOSPHORIBOSYLTRANSFERASE"/>
    <property type="match status" value="1"/>
</dbReference>
<dbReference type="PANTHER" id="PTHR19278:SF9">
    <property type="entry name" value="URIDINE 5'-MONOPHOSPHATE SYNTHASE"/>
    <property type="match status" value="1"/>
</dbReference>
<dbReference type="Pfam" id="PF00156">
    <property type="entry name" value="Pribosyltran"/>
    <property type="match status" value="1"/>
</dbReference>
<dbReference type="SUPFAM" id="SSF53271">
    <property type="entry name" value="PRTase-like"/>
    <property type="match status" value="1"/>
</dbReference>
<reference key="1">
    <citation type="journal article" date="2009" name="Appl. Environ. Microbiol.">
        <title>Rhizobium sp. strain NGR234 possesses a remarkable number of secretion systems.</title>
        <authorList>
            <person name="Schmeisser C."/>
            <person name="Liesegang H."/>
            <person name="Krysciak D."/>
            <person name="Bakkou N."/>
            <person name="Le Quere A."/>
            <person name="Wollherr A."/>
            <person name="Heinemeyer I."/>
            <person name="Morgenstern B."/>
            <person name="Pommerening-Roeser A."/>
            <person name="Flores M."/>
            <person name="Palacios R."/>
            <person name="Brenner S."/>
            <person name="Gottschalk G."/>
            <person name="Schmitz R.A."/>
            <person name="Broughton W.J."/>
            <person name="Perret X."/>
            <person name="Strittmatter A.W."/>
            <person name="Streit W.R."/>
        </authorList>
    </citation>
    <scope>NUCLEOTIDE SEQUENCE [LARGE SCALE GENOMIC DNA]</scope>
    <source>
        <strain>NBRC 101917 / NGR234</strain>
    </source>
</reference>
<keyword id="KW-0328">Glycosyltransferase</keyword>
<keyword id="KW-0460">Magnesium</keyword>
<keyword id="KW-0665">Pyrimidine biosynthesis</keyword>
<keyword id="KW-1185">Reference proteome</keyword>
<keyword id="KW-0808">Transferase</keyword>
<protein>
    <recommendedName>
        <fullName evidence="1">Orotate phosphoribosyltransferase</fullName>
        <shortName evidence="1">OPRT</shortName>
        <shortName evidence="1">OPRTase</shortName>
        <ecNumber evidence="1">2.4.2.10</ecNumber>
    </recommendedName>
</protein>
<comment type="function">
    <text evidence="1">Catalyzes the transfer of a ribosyl phosphate group from 5-phosphoribose 1-diphosphate to orotate, leading to the formation of orotidine monophosphate (OMP).</text>
</comment>
<comment type="catalytic activity">
    <reaction evidence="1">
        <text>orotidine 5'-phosphate + diphosphate = orotate + 5-phospho-alpha-D-ribose 1-diphosphate</text>
        <dbReference type="Rhea" id="RHEA:10380"/>
        <dbReference type="ChEBI" id="CHEBI:30839"/>
        <dbReference type="ChEBI" id="CHEBI:33019"/>
        <dbReference type="ChEBI" id="CHEBI:57538"/>
        <dbReference type="ChEBI" id="CHEBI:58017"/>
        <dbReference type="EC" id="2.4.2.10"/>
    </reaction>
</comment>
<comment type="cofactor">
    <cofactor evidence="1">
        <name>Mg(2+)</name>
        <dbReference type="ChEBI" id="CHEBI:18420"/>
    </cofactor>
</comment>
<comment type="pathway">
    <text evidence="1">Pyrimidine metabolism; UMP biosynthesis via de novo pathway; UMP from orotate: step 1/2.</text>
</comment>
<comment type="subunit">
    <text evidence="1">Homodimer.</text>
</comment>
<comment type="similarity">
    <text evidence="1">Belongs to the purine/pyrimidine phosphoribosyltransferase family. PyrE subfamily.</text>
</comment>
<proteinExistence type="inferred from homology"/>